<feature type="transit peptide" description="Mitochondrion" evidence="2">
    <location>
        <begin position="1"/>
        <end position="21"/>
    </location>
</feature>
<feature type="chain" id="PRO_0000349200" description="Citrate synthase-lysine N-methyltransferase CSKMT, mitochondrial">
    <location>
        <begin position="22"/>
        <end position="240"/>
    </location>
</feature>
<gene>
    <name evidence="1" type="primary">CSKMT</name>
    <name evidence="1" type="synonym">METTL12</name>
</gene>
<organism>
    <name type="scientific">Pongo abelii</name>
    <name type="common">Sumatran orangutan</name>
    <name type="synonym">Pongo pygmaeus abelii</name>
    <dbReference type="NCBI Taxonomy" id="9601"/>
    <lineage>
        <taxon>Eukaryota</taxon>
        <taxon>Metazoa</taxon>
        <taxon>Chordata</taxon>
        <taxon>Craniata</taxon>
        <taxon>Vertebrata</taxon>
        <taxon>Euteleostomi</taxon>
        <taxon>Mammalia</taxon>
        <taxon>Eutheria</taxon>
        <taxon>Euarchontoglires</taxon>
        <taxon>Primates</taxon>
        <taxon>Haplorrhini</taxon>
        <taxon>Catarrhini</taxon>
        <taxon>Hominidae</taxon>
        <taxon>Pongo</taxon>
    </lineage>
</organism>
<reference key="1">
    <citation type="submission" date="2004-11" db="EMBL/GenBank/DDBJ databases">
        <authorList>
            <consortium name="The German cDNA consortium"/>
        </authorList>
    </citation>
    <scope>NUCLEOTIDE SEQUENCE [LARGE SCALE MRNA]</scope>
    <source>
        <tissue>Heart</tissue>
    </source>
</reference>
<sequence length="240" mass="25956">MAALRRMLHLPRLTMGTCRPFAGSLADSCLADRCLWDRLHAQPRLGTVPTFDWFFGYEEVQGLLLPLLQEAQAASPLRVLDVGCGTSSLCTGLYTKSPHPVDVLGVDFSPVAVAHMNSLLEGGPGQTPLCPGHPASSLHFMHADARNLGAVASSGSFQLLLDKGTWDAVAQGGLPRAYQLLSECLRVLNPQGTLIQFSDEDPDVRLPCLEQGSRGWTVTVQELGPFRGITYFAYLIQGSH</sequence>
<accession>Q5RCI5</accession>
<dbReference type="EC" id="2.1.1.-" evidence="1"/>
<dbReference type="EMBL" id="CR858285">
    <property type="protein sequence ID" value="CAH90522.1"/>
    <property type="molecule type" value="mRNA"/>
</dbReference>
<dbReference type="RefSeq" id="NP_001125277.1">
    <property type="nucleotide sequence ID" value="NM_001131805.1"/>
</dbReference>
<dbReference type="SMR" id="Q5RCI5"/>
<dbReference type="FunCoup" id="Q5RCI5">
    <property type="interactions" value="9"/>
</dbReference>
<dbReference type="STRING" id="9601.ENSPPYP00000003646"/>
<dbReference type="Ensembl" id="ENSPPYT00000003775.2">
    <property type="protein sequence ID" value="ENSPPYP00000003646.1"/>
    <property type="gene ID" value="ENSPPYG00000003156.2"/>
</dbReference>
<dbReference type="GeneID" id="100172174"/>
<dbReference type="KEGG" id="pon:100172174"/>
<dbReference type="CTD" id="751071"/>
<dbReference type="eggNOG" id="KOG2352">
    <property type="taxonomic scope" value="Eukaryota"/>
</dbReference>
<dbReference type="GeneTree" id="ENSGT00510000049875"/>
<dbReference type="HOGENOM" id="CLU_098158_0_0_1"/>
<dbReference type="InParanoid" id="Q5RCI5"/>
<dbReference type="OMA" id="LMQEHIQ"/>
<dbReference type="OrthoDB" id="411785at2759"/>
<dbReference type="TreeFam" id="TF354334"/>
<dbReference type="Proteomes" id="UP000001595">
    <property type="component" value="Chromosome 11"/>
</dbReference>
<dbReference type="GO" id="GO:0005739">
    <property type="term" value="C:mitochondrion"/>
    <property type="evidence" value="ECO:0007669"/>
    <property type="project" value="UniProtKB-SubCell"/>
</dbReference>
<dbReference type="GO" id="GO:0016278">
    <property type="term" value="F:lysine N-methyltransferase activity"/>
    <property type="evidence" value="ECO:0000250"/>
    <property type="project" value="UniProtKB"/>
</dbReference>
<dbReference type="GO" id="GO:0016279">
    <property type="term" value="F:protein-lysine N-methyltransferase activity"/>
    <property type="evidence" value="ECO:0000250"/>
    <property type="project" value="UniProtKB"/>
</dbReference>
<dbReference type="GO" id="GO:0018027">
    <property type="term" value="P:peptidyl-lysine dimethylation"/>
    <property type="evidence" value="ECO:0000250"/>
    <property type="project" value="UniProtKB"/>
</dbReference>
<dbReference type="GO" id="GO:0018026">
    <property type="term" value="P:peptidyl-lysine monomethylation"/>
    <property type="evidence" value="ECO:0000250"/>
    <property type="project" value="UniProtKB"/>
</dbReference>
<dbReference type="GO" id="GO:0018023">
    <property type="term" value="P:peptidyl-lysine trimethylation"/>
    <property type="evidence" value="ECO:0000250"/>
    <property type="project" value="UniProtKB"/>
</dbReference>
<dbReference type="GO" id="GO:0006479">
    <property type="term" value="P:protein methylation"/>
    <property type="evidence" value="ECO:0000250"/>
    <property type="project" value="UniProtKB"/>
</dbReference>
<dbReference type="CDD" id="cd02440">
    <property type="entry name" value="AdoMet_MTases"/>
    <property type="match status" value="1"/>
</dbReference>
<dbReference type="FunFam" id="3.40.50.150:FF:000200">
    <property type="entry name" value="Citrate synthase lysine methyltransferase"/>
    <property type="match status" value="1"/>
</dbReference>
<dbReference type="Gene3D" id="3.40.50.150">
    <property type="entry name" value="Vaccinia Virus protein VP39"/>
    <property type="match status" value="1"/>
</dbReference>
<dbReference type="InterPro" id="IPR051419">
    <property type="entry name" value="Lys/N-term_MeTrsfase_sf"/>
</dbReference>
<dbReference type="InterPro" id="IPR025714">
    <property type="entry name" value="Methyltranfer_dom"/>
</dbReference>
<dbReference type="InterPro" id="IPR029063">
    <property type="entry name" value="SAM-dependent_MTases_sf"/>
</dbReference>
<dbReference type="PANTHER" id="PTHR12176:SF83">
    <property type="entry name" value="CITRATE SYNTHASE-LYSINE N-METHYLTRANSFERASE CSKMT, MITOCHONDRIAL"/>
    <property type="match status" value="1"/>
</dbReference>
<dbReference type="PANTHER" id="PTHR12176">
    <property type="entry name" value="SAM-DEPENDENT METHYLTRANSFERASE SUPERFAMILY PROTEIN"/>
    <property type="match status" value="1"/>
</dbReference>
<dbReference type="Pfam" id="PF13847">
    <property type="entry name" value="Methyltransf_31"/>
    <property type="match status" value="1"/>
</dbReference>
<dbReference type="SUPFAM" id="SSF53335">
    <property type="entry name" value="S-adenosyl-L-methionine-dependent methyltransferases"/>
    <property type="match status" value="1"/>
</dbReference>
<proteinExistence type="evidence at transcript level"/>
<comment type="function">
    <text evidence="1">Protein-lysine methyltransferase that selectively trimethylates citrate synthase (CS) in mitochondria. Seems to conduct trimethylation in a highly distributive manner rather than in a processive manner, and thus introduces a single methyl group per binding event.</text>
</comment>
<comment type="catalytic activity">
    <reaction evidence="1">
        <text>L-lysyl-[citrate synthase] + S-adenosyl-L-methionine = N(6)-methyl-L-lysyl-[citrate synthase] + S-adenosyl-L-homocysteine + H(+)</text>
        <dbReference type="Rhea" id="RHEA:55544"/>
        <dbReference type="Rhea" id="RHEA-COMP:14212"/>
        <dbReference type="Rhea" id="RHEA-COMP:14213"/>
        <dbReference type="ChEBI" id="CHEBI:15378"/>
        <dbReference type="ChEBI" id="CHEBI:29969"/>
        <dbReference type="ChEBI" id="CHEBI:57856"/>
        <dbReference type="ChEBI" id="CHEBI:59789"/>
        <dbReference type="ChEBI" id="CHEBI:61929"/>
    </reaction>
</comment>
<comment type="catalytic activity">
    <reaction evidence="1">
        <text>N(6)-methyl-L-lysyl-[citrate synthase] + S-adenosyl-L-methionine = N(6),N(6)-dimethyl-L-lysyl-[citrate synthase] + S-adenosyl-L-homocysteine + H(+)</text>
        <dbReference type="Rhea" id="RHEA:55548"/>
        <dbReference type="Rhea" id="RHEA-COMP:14213"/>
        <dbReference type="Rhea" id="RHEA-COMP:14214"/>
        <dbReference type="ChEBI" id="CHEBI:15378"/>
        <dbReference type="ChEBI" id="CHEBI:57856"/>
        <dbReference type="ChEBI" id="CHEBI:59789"/>
        <dbReference type="ChEBI" id="CHEBI:61929"/>
        <dbReference type="ChEBI" id="CHEBI:61976"/>
    </reaction>
</comment>
<comment type="catalytic activity">
    <reaction evidence="1">
        <text>N(6),N(6)-dimethyl-L-lysyl-[citrate synthase] + S-adenosyl-L-methionine = N(6),N(6),N(6)-trimethyl-L-lysyl-[citrate synthase] + S-adenosyl-L-homocysteine + H(+)</text>
        <dbReference type="Rhea" id="RHEA:55552"/>
        <dbReference type="Rhea" id="RHEA-COMP:14214"/>
        <dbReference type="Rhea" id="RHEA-COMP:14215"/>
        <dbReference type="ChEBI" id="CHEBI:15378"/>
        <dbReference type="ChEBI" id="CHEBI:57856"/>
        <dbReference type="ChEBI" id="CHEBI:59789"/>
        <dbReference type="ChEBI" id="CHEBI:61961"/>
        <dbReference type="ChEBI" id="CHEBI:61976"/>
    </reaction>
</comment>
<comment type="activity regulation">
    <text evidence="1">Citrate synthase-lysine methyltransferase activity is inhibited by S-adenosylhomocysteine (AdoHcy) and oxaloacetate (OAA).</text>
</comment>
<comment type="subcellular location">
    <subcellularLocation>
        <location evidence="1">Mitochondrion</location>
    </subcellularLocation>
</comment>
<comment type="similarity">
    <text evidence="3">Belongs to the methyltransferase superfamily.</text>
</comment>
<name>CSKMT_PONAB</name>
<evidence type="ECO:0000250" key="1">
    <source>
        <dbReference type="UniProtKB" id="A8MUP2"/>
    </source>
</evidence>
<evidence type="ECO:0000255" key="2"/>
<evidence type="ECO:0000305" key="3"/>
<keyword id="KW-0489">Methyltransferase</keyword>
<keyword id="KW-0496">Mitochondrion</keyword>
<keyword id="KW-1185">Reference proteome</keyword>
<keyword id="KW-0949">S-adenosyl-L-methionine</keyword>
<keyword id="KW-0808">Transferase</keyword>
<keyword id="KW-0809">Transit peptide</keyword>
<protein>
    <recommendedName>
        <fullName evidence="1">Citrate synthase-lysine N-methyltransferase CSKMT, mitochondrial</fullName>
        <shortName evidence="1">CS-KMT</shortName>
        <ecNumber evidence="1">2.1.1.-</ecNumber>
    </recommendedName>
    <alternativeName>
        <fullName evidence="1">Methyltransferase-like protein 12, mitochondrial</fullName>
    </alternativeName>
</protein>